<keyword id="KW-0963">Cytoplasm</keyword>
<keyword id="KW-0342">GTP-binding</keyword>
<keyword id="KW-0460">Magnesium</keyword>
<keyword id="KW-0479">Metal-binding</keyword>
<keyword id="KW-0501">Molybdenum cofactor biosynthesis</keyword>
<keyword id="KW-0547">Nucleotide-binding</keyword>
<keyword id="KW-0808">Transferase</keyword>
<accession>B9J1G5</accession>
<reference key="1">
    <citation type="journal article" date="2009" name="J. Bacteriol.">
        <title>Complete genome sequence of the extremophilic Bacillus cereus strain Q1 with industrial applications.</title>
        <authorList>
            <person name="Xiong Z."/>
            <person name="Jiang Y."/>
            <person name="Qi D."/>
            <person name="Lu H."/>
            <person name="Yang F."/>
            <person name="Yang J."/>
            <person name="Chen L."/>
            <person name="Sun L."/>
            <person name="Xu X."/>
            <person name="Xue Y."/>
            <person name="Zhu Y."/>
            <person name="Jin Q."/>
        </authorList>
    </citation>
    <scope>NUCLEOTIDE SEQUENCE [LARGE SCALE GENOMIC DNA]</scope>
    <source>
        <strain>Q1</strain>
    </source>
</reference>
<gene>
    <name evidence="1" type="primary">mobA</name>
    <name type="ordered locus">BCQ_4577</name>
</gene>
<feature type="chain" id="PRO_1000132955" description="Probable molybdenum cofactor guanylyltransferase">
    <location>
        <begin position="1"/>
        <end position="200"/>
    </location>
</feature>
<feature type="binding site" evidence="1">
    <location>
        <begin position="9"/>
        <end position="11"/>
    </location>
    <ligand>
        <name>GTP</name>
        <dbReference type="ChEBI" id="CHEBI:37565"/>
    </ligand>
</feature>
<feature type="binding site" evidence="1">
    <location>
        <position position="21"/>
    </location>
    <ligand>
        <name>GTP</name>
        <dbReference type="ChEBI" id="CHEBI:37565"/>
    </ligand>
</feature>
<feature type="binding site" evidence="1">
    <location>
        <position position="69"/>
    </location>
    <ligand>
        <name>GTP</name>
        <dbReference type="ChEBI" id="CHEBI:37565"/>
    </ligand>
</feature>
<feature type="binding site" evidence="1">
    <location>
        <position position="100"/>
    </location>
    <ligand>
        <name>GTP</name>
        <dbReference type="ChEBI" id="CHEBI:37565"/>
    </ligand>
</feature>
<feature type="binding site" evidence="1">
    <location>
        <position position="100"/>
    </location>
    <ligand>
        <name>Mg(2+)</name>
        <dbReference type="ChEBI" id="CHEBI:18420"/>
    </ligand>
</feature>
<proteinExistence type="inferred from homology"/>
<protein>
    <recommendedName>
        <fullName evidence="1">Probable molybdenum cofactor guanylyltransferase</fullName>
        <shortName evidence="1">MoCo guanylyltransferase</shortName>
        <ecNumber evidence="1">2.7.7.77</ecNumber>
    </recommendedName>
    <alternativeName>
        <fullName evidence="1">GTP:molybdopterin guanylyltransferase</fullName>
    </alternativeName>
    <alternativeName>
        <fullName evidence="1">Mo-MPT guanylyltransferase</fullName>
    </alternativeName>
    <alternativeName>
        <fullName evidence="1">Molybdopterin guanylyltransferase</fullName>
    </alternativeName>
    <alternativeName>
        <fullName evidence="1">Molybdopterin-guanine dinucleotide synthase</fullName>
        <shortName evidence="1">MGD synthase</shortName>
    </alternativeName>
</protein>
<sequence length="200" mass="22487">MSKWAGIVLAGGMSSRFGEPKALASWQGSTFIEHILKLMTSALQEVVVISHSHIKERVEQLVQVPVIEDIPHYKGNGPLAGIVSGMEYIEADWYAIMPCDAPNVSHEWFTILLEQTSNNYDAVVPIINGRKQPLLAAYHNRVKEKIYALLQEEKRSMGQLLSQCNVKYIAGEDIQANADWFINVNTKEEYVQAQKDLSNE</sequence>
<name>MOBA_BACCQ</name>
<dbReference type="EC" id="2.7.7.77" evidence="1"/>
<dbReference type="EMBL" id="CP000227">
    <property type="protein sequence ID" value="ACM15003.1"/>
    <property type="molecule type" value="Genomic_DNA"/>
</dbReference>
<dbReference type="SMR" id="B9J1G5"/>
<dbReference type="KEGG" id="bcq:BCQ_4577"/>
<dbReference type="HOGENOM" id="CLU_055597_2_0_9"/>
<dbReference type="Proteomes" id="UP000000441">
    <property type="component" value="Chromosome"/>
</dbReference>
<dbReference type="GO" id="GO:0005737">
    <property type="term" value="C:cytoplasm"/>
    <property type="evidence" value="ECO:0007669"/>
    <property type="project" value="UniProtKB-SubCell"/>
</dbReference>
<dbReference type="GO" id="GO:0005525">
    <property type="term" value="F:GTP binding"/>
    <property type="evidence" value="ECO:0007669"/>
    <property type="project" value="UniProtKB-UniRule"/>
</dbReference>
<dbReference type="GO" id="GO:0046872">
    <property type="term" value="F:metal ion binding"/>
    <property type="evidence" value="ECO:0007669"/>
    <property type="project" value="UniProtKB-KW"/>
</dbReference>
<dbReference type="GO" id="GO:0061603">
    <property type="term" value="F:molybdenum cofactor guanylyltransferase activity"/>
    <property type="evidence" value="ECO:0007669"/>
    <property type="project" value="UniProtKB-EC"/>
</dbReference>
<dbReference type="GO" id="GO:0006777">
    <property type="term" value="P:Mo-molybdopterin cofactor biosynthetic process"/>
    <property type="evidence" value="ECO:0007669"/>
    <property type="project" value="UniProtKB-KW"/>
</dbReference>
<dbReference type="CDD" id="cd02503">
    <property type="entry name" value="MobA"/>
    <property type="match status" value="1"/>
</dbReference>
<dbReference type="FunFam" id="3.90.550.10:FF:000121">
    <property type="entry name" value="Probable molybdenum cofactor guanylyltransferase"/>
    <property type="match status" value="1"/>
</dbReference>
<dbReference type="Gene3D" id="3.90.550.10">
    <property type="entry name" value="Spore Coat Polysaccharide Biosynthesis Protein SpsA, Chain A"/>
    <property type="match status" value="1"/>
</dbReference>
<dbReference type="HAMAP" id="MF_00316">
    <property type="entry name" value="MobA"/>
    <property type="match status" value="1"/>
</dbReference>
<dbReference type="InterPro" id="IPR025877">
    <property type="entry name" value="MobA-like_NTP_Trfase"/>
</dbReference>
<dbReference type="InterPro" id="IPR013482">
    <property type="entry name" value="Molybde_CF_guanTrfase"/>
</dbReference>
<dbReference type="InterPro" id="IPR029044">
    <property type="entry name" value="Nucleotide-diphossugar_trans"/>
</dbReference>
<dbReference type="PANTHER" id="PTHR19136">
    <property type="entry name" value="MOLYBDENUM COFACTOR GUANYLYLTRANSFERASE"/>
    <property type="match status" value="1"/>
</dbReference>
<dbReference type="PANTHER" id="PTHR19136:SF81">
    <property type="entry name" value="MOLYBDENUM COFACTOR GUANYLYLTRANSFERASE"/>
    <property type="match status" value="1"/>
</dbReference>
<dbReference type="Pfam" id="PF12804">
    <property type="entry name" value="NTP_transf_3"/>
    <property type="match status" value="1"/>
</dbReference>
<dbReference type="SUPFAM" id="SSF53448">
    <property type="entry name" value="Nucleotide-diphospho-sugar transferases"/>
    <property type="match status" value="1"/>
</dbReference>
<evidence type="ECO:0000255" key="1">
    <source>
        <dbReference type="HAMAP-Rule" id="MF_00316"/>
    </source>
</evidence>
<comment type="function">
    <text evidence="1">Transfers a GMP moiety from GTP to Mo-molybdopterin (Mo-MPT) cofactor (Moco or molybdenum cofactor) to form Mo-molybdopterin guanine dinucleotide (Mo-MGD) cofactor.</text>
</comment>
<comment type="catalytic activity">
    <reaction evidence="1">
        <text>Mo-molybdopterin + GTP + H(+) = Mo-molybdopterin guanine dinucleotide + diphosphate</text>
        <dbReference type="Rhea" id="RHEA:34243"/>
        <dbReference type="ChEBI" id="CHEBI:15378"/>
        <dbReference type="ChEBI" id="CHEBI:33019"/>
        <dbReference type="ChEBI" id="CHEBI:37565"/>
        <dbReference type="ChEBI" id="CHEBI:71302"/>
        <dbReference type="ChEBI" id="CHEBI:71310"/>
        <dbReference type="EC" id="2.7.7.77"/>
    </reaction>
</comment>
<comment type="cofactor">
    <cofactor evidence="1">
        <name>Mg(2+)</name>
        <dbReference type="ChEBI" id="CHEBI:18420"/>
    </cofactor>
</comment>
<comment type="subcellular location">
    <subcellularLocation>
        <location evidence="1">Cytoplasm</location>
    </subcellularLocation>
</comment>
<comment type="domain">
    <text evidence="1">The N-terminal domain determines nucleotide recognition and specific binding, while the C-terminal domain determines the specific binding to the target protein.</text>
</comment>
<comment type="similarity">
    <text evidence="1">Belongs to the MobA family.</text>
</comment>
<organism>
    <name type="scientific">Bacillus cereus (strain Q1)</name>
    <dbReference type="NCBI Taxonomy" id="361100"/>
    <lineage>
        <taxon>Bacteria</taxon>
        <taxon>Bacillati</taxon>
        <taxon>Bacillota</taxon>
        <taxon>Bacilli</taxon>
        <taxon>Bacillales</taxon>
        <taxon>Bacillaceae</taxon>
        <taxon>Bacillus</taxon>
        <taxon>Bacillus cereus group</taxon>
    </lineage>
</organism>